<proteinExistence type="evidence at protein level"/>
<comment type="function">
    <text evidence="3">Component of the FACT complex, a general chromatin factor that acts to reorganize nucleosomes. The FACT complex is involved in multiple processes that require DNA as a template such as mRNA elongation, DNA replication and DNA repair. During transcription elongation the FACT complex acts as a histone chaperone that both destabilizes and restores nucleosomal structure. It facilitates the passage of RNA polymerase II and transcription by promoting the dissociation of one histone H2A-H2B dimer from the nucleosome, then subsequently promotes the reestablishment of the nucleosome following the passage of RNA polymerase II. The FACT complex is required for expression of Hox genes.</text>
</comment>
<comment type="subunit">
    <text evidence="3">Component of the FACT complex, a stable heterodimer of dre4/spt16 and Ssrp. Interacts with TRL/GAGA.</text>
</comment>
<comment type="subcellular location">
    <subcellularLocation>
        <location evidence="4">Nucleus</location>
    </subcellularLocation>
    <subcellularLocation>
        <location evidence="4">Chromosome</location>
    </subcellularLocation>
    <text>Colocalizes with RNA polymerase II on chromatin. Recruited to actively transcribed loci.</text>
</comment>
<comment type="alternative products">
    <event type="alternative splicing"/>
    <isoform>
        <id>Q8IRG6-1</id>
        <name>B</name>
        <sequence type="displayed"/>
    </isoform>
    <isoform>
        <id>Q8IRG6-2</id>
        <name>A</name>
        <sequence type="described" ref="VSP_019625"/>
    </isoform>
</comment>
<comment type="similarity">
    <text evidence="7">Belongs to the peptidase M24 family. SPT16 subfamily.</text>
</comment>
<comment type="caution">
    <text evidence="7">Although related to the peptidase M24 family, this protein lacks conserved active site residues suggesting that it may lack peptidase activity.</text>
</comment>
<comment type="sequence caution" evidence="7">
    <conflict type="frameshift">
        <sequence resource="EMBL-CDS" id="AAB80935"/>
    </conflict>
</comment>
<comment type="sequence caution" evidence="7">
    <conflict type="frameshift">
        <sequence resource="EMBL-CDS" id="AAB80936"/>
    </conflict>
</comment>
<feature type="chain" id="PRO_0000245174" description="FACT complex subunit spt16">
    <location>
        <begin position="1"/>
        <end position="1083"/>
    </location>
</feature>
<feature type="region of interest" description="Disordered" evidence="2">
    <location>
        <begin position="923"/>
        <end position="1083"/>
    </location>
</feature>
<feature type="coiled-coil region" evidence="1">
    <location>
        <begin position="466"/>
        <end position="504"/>
    </location>
</feature>
<feature type="compositionally biased region" description="Acidic residues" evidence="2">
    <location>
        <begin position="935"/>
        <end position="987"/>
    </location>
</feature>
<feature type="compositionally biased region" description="Basic and acidic residues" evidence="2">
    <location>
        <begin position="988"/>
        <end position="1023"/>
    </location>
</feature>
<feature type="compositionally biased region" description="Basic residues" evidence="2">
    <location>
        <begin position="1024"/>
        <end position="1033"/>
    </location>
</feature>
<feature type="compositionally biased region" description="Basic and acidic residues" evidence="2">
    <location>
        <begin position="1058"/>
        <end position="1076"/>
    </location>
</feature>
<feature type="modified residue" description="Phosphoserine" evidence="5">
    <location>
        <position position="437"/>
    </location>
</feature>
<feature type="splice variant" id="VSP_019625" description="In isoform A." evidence="6">
    <original>H</original>
    <variation>HSRRDREEARSSSHSKKHKSNSSSSSSHLKSSSSKHGSSS</variation>
    <location>
        <position position="1031"/>
    </location>
</feature>
<feature type="sequence conflict" description="In Ref. 1; AAB80935/AAB80936." evidence="7" ref="1">
    <original>L</original>
    <variation>V</variation>
    <location>
        <position position="345"/>
    </location>
</feature>
<feature type="sequence conflict" description="In Ref. 1; AAB80935/AAB80936." evidence="7" ref="1">
    <original>A</original>
    <variation>R</variation>
    <location>
        <position position="598"/>
    </location>
</feature>
<feature type="sequence conflict" description="In Ref. 1; AAB80935/AAB80936." evidence="7" ref="1">
    <original>S</original>
    <variation>I</variation>
    <location>
        <position position="1057"/>
    </location>
</feature>
<feature type="sequence conflict" description="In Ref. 1; AAB80935/AAB80936." evidence="7" ref="1">
    <original>KS</original>
    <variation>NA</variation>
    <location>
        <begin position="1080"/>
        <end position="1081"/>
    </location>
</feature>
<name>SPT16_DROME</name>
<accession>Q8IRG6</accession>
<accession>O17045</accession>
<accession>O17046</accession>
<accession>Q7YTY1</accession>
<accession>Q86SB9</accession>
<accession>Q9W071</accession>
<reference key="1">
    <citation type="submission" date="1997-09" db="EMBL/GenBank/DDBJ databases">
        <authorList>
            <person name="Washington A.V."/>
            <person name="Robinson P."/>
            <person name="Sliter T.J."/>
        </authorList>
    </citation>
    <scope>NUCLEOTIDE SEQUENCE [MRNA] (ISOFORM A)</scope>
</reference>
<reference key="2">
    <citation type="journal article" date="2000" name="Science">
        <title>The genome sequence of Drosophila melanogaster.</title>
        <authorList>
            <person name="Adams M.D."/>
            <person name="Celniker S.E."/>
            <person name="Holt R.A."/>
            <person name="Evans C.A."/>
            <person name="Gocayne J.D."/>
            <person name="Amanatides P.G."/>
            <person name="Scherer S.E."/>
            <person name="Li P.W."/>
            <person name="Hoskins R.A."/>
            <person name="Galle R.F."/>
            <person name="George R.A."/>
            <person name="Lewis S.E."/>
            <person name="Richards S."/>
            <person name="Ashburner M."/>
            <person name="Henderson S.N."/>
            <person name="Sutton G.G."/>
            <person name="Wortman J.R."/>
            <person name="Yandell M.D."/>
            <person name="Zhang Q."/>
            <person name="Chen L.X."/>
            <person name="Brandon R.C."/>
            <person name="Rogers Y.-H.C."/>
            <person name="Blazej R.G."/>
            <person name="Champe M."/>
            <person name="Pfeiffer B.D."/>
            <person name="Wan K.H."/>
            <person name="Doyle C."/>
            <person name="Baxter E.G."/>
            <person name="Helt G."/>
            <person name="Nelson C.R."/>
            <person name="Miklos G.L.G."/>
            <person name="Abril J.F."/>
            <person name="Agbayani A."/>
            <person name="An H.-J."/>
            <person name="Andrews-Pfannkoch C."/>
            <person name="Baldwin D."/>
            <person name="Ballew R.M."/>
            <person name="Basu A."/>
            <person name="Baxendale J."/>
            <person name="Bayraktaroglu L."/>
            <person name="Beasley E.M."/>
            <person name="Beeson K.Y."/>
            <person name="Benos P.V."/>
            <person name="Berman B.P."/>
            <person name="Bhandari D."/>
            <person name="Bolshakov S."/>
            <person name="Borkova D."/>
            <person name="Botchan M.R."/>
            <person name="Bouck J."/>
            <person name="Brokstein P."/>
            <person name="Brottier P."/>
            <person name="Burtis K.C."/>
            <person name="Busam D.A."/>
            <person name="Butler H."/>
            <person name="Cadieu E."/>
            <person name="Center A."/>
            <person name="Chandra I."/>
            <person name="Cherry J.M."/>
            <person name="Cawley S."/>
            <person name="Dahlke C."/>
            <person name="Davenport L.B."/>
            <person name="Davies P."/>
            <person name="de Pablos B."/>
            <person name="Delcher A."/>
            <person name="Deng Z."/>
            <person name="Mays A.D."/>
            <person name="Dew I."/>
            <person name="Dietz S.M."/>
            <person name="Dodson K."/>
            <person name="Doup L.E."/>
            <person name="Downes M."/>
            <person name="Dugan-Rocha S."/>
            <person name="Dunkov B.C."/>
            <person name="Dunn P."/>
            <person name="Durbin K.J."/>
            <person name="Evangelista C.C."/>
            <person name="Ferraz C."/>
            <person name="Ferriera S."/>
            <person name="Fleischmann W."/>
            <person name="Fosler C."/>
            <person name="Gabrielian A.E."/>
            <person name="Garg N.S."/>
            <person name="Gelbart W.M."/>
            <person name="Glasser K."/>
            <person name="Glodek A."/>
            <person name="Gong F."/>
            <person name="Gorrell J.H."/>
            <person name="Gu Z."/>
            <person name="Guan P."/>
            <person name="Harris M."/>
            <person name="Harris N.L."/>
            <person name="Harvey D.A."/>
            <person name="Heiman T.J."/>
            <person name="Hernandez J.R."/>
            <person name="Houck J."/>
            <person name="Hostin D."/>
            <person name="Houston K.A."/>
            <person name="Howland T.J."/>
            <person name="Wei M.-H."/>
            <person name="Ibegwam C."/>
            <person name="Jalali M."/>
            <person name="Kalush F."/>
            <person name="Karpen G.H."/>
            <person name="Ke Z."/>
            <person name="Kennison J.A."/>
            <person name="Ketchum K.A."/>
            <person name="Kimmel B.E."/>
            <person name="Kodira C.D."/>
            <person name="Kraft C.L."/>
            <person name="Kravitz S."/>
            <person name="Kulp D."/>
            <person name="Lai Z."/>
            <person name="Lasko P."/>
            <person name="Lei Y."/>
            <person name="Levitsky A.A."/>
            <person name="Li J.H."/>
            <person name="Li Z."/>
            <person name="Liang Y."/>
            <person name="Lin X."/>
            <person name="Liu X."/>
            <person name="Mattei B."/>
            <person name="McIntosh T.C."/>
            <person name="McLeod M.P."/>
            <person name="McPherson D."/>
            <person name="Merkulov G."/>
            <person name="Milshina N.V."/>
            <person name="Mobarry C."/>
            <person name="Morris J."/>
            <person name="Moshrefi A."/>
            <person name="Mount S.M."/>
            <person name="Moy M."/>
            <person name="Murphy B."/>
            <person name="Murphy L."/>
            <person name="Muzny D.M."/>
            <person name="Nelson D.L."/>
            <person name="Nelson D.R."/>
            <person name="Nelson K.A."/>
            <person name="Nixon K."/>
            <person name="Nusskern D.R."/>
            <person name="Pacleb J.M."/>
            <person name="Palazzolo M."/>
            <person name="Pittman G.S."/>
            <person name="Pan S."/>
            <person name="Pollard J."/>
            <person name="Puri V."/>
            <person name="Reese M.G."/>
            <person name="Reinert K."/>
            <person name="Remington K."/>
            <person name="Saunders R.D.C."/>
            <person name="Scheeler F."/>
            <person name="Shen H."/>
            <person name="Shue B.C."/>
            <person name="Siden-Kiamos I."/>
            <person name="Simpson M."/>
            <person name="Skupski M.P."/>
            <person name="Smith T.J."/>
            <person name="Spier E."/>
            <person name="Spradling A.C."/>
            <person name="Stapleton M."/>
            <person name="Strong R."/>
            <person name="Sun E."/>
            <person name="Svirskas R."/>
            <person name="Tector C."/>
            <person name="Turner R."/>
            <person name="Venter E."/>
            <person name="Wang A.H."/>
            <person name="Wang X."/>
            <person name="Wang Z.-Y."/>
            <person name="Wassarman D.A."/>
            <person name="Weinstock G.M."/>
            <person name="Weissenbach J."/>
            <person name="Williams S.M."/>
            <person name="Woodage T."/>
            <person name="Worley K.C."/>
            <person name="Wu D."/>
            <person name="Yang S."/>
            <person name="Yao Q.A."/>
            <person name="Ye J."/>
            <person name="Yeh R.-F."/>
            <person name="Zaveri J.S."/>
            <person name="Zhan M."/>
            <person name="Zhang G."/>
            <person name="Zhao Q."/>
            <person name="Zheng L."/>
            <person name="Zheng X.H."/>
            <person name="Zhong F.N."/>
            <person name="Zhong W."/>
            <person name="Zhou X."/>
            <person name="Zhu S.C."/>
            <person name="Zhu X."/>
            <person name="Smith H.O."/>
            <person name="Gibbs R.A."/>
            <person name="Myers E.W."/>
            <person name="Rubin G.M."/>
            <person name="Venter J.C."/>
        </authorList>
    </citation>
    <scope>NUCLEOTIDE SEQUENCE [LARGE SCALE GENOMIC DNA]</scope>
    <source>
        <strain>Berkeley</strain>
    </source>
</reference>
<reference key="3">
    <citation type="journal article" date="2002" name="Genome Biol.">
        <title>Annotation of the Drosophila melanogaster euchromatic genome: a systematic review.</title>
        <authorList>
            <person name="Misra S."/>
            <person name="Crosby M.A."/>
            <person name="Mungall C.J."/>
            <person name="Matthews B.B."/>
            <person name="Campbell K.S."/>
            <person name="Hradecky P."/>
            <person name="Huang Y."/>
            <person name="Kaminker J.S."/>
            <person name="Millburn G.H."/>
            <person name="Prochnik S.E."/>
            <person name="Smith C.D."/>
            <person name="Tupy J.L."/>
            <person name="Whitfield E.J."/>
            <person name="Bayraktaroglu L."/>
            <person name="Berman B.P."/>
            <person name="Bettencourt B.R."/>
            <person name="Celniker S.E."/>
            <person name="de Grey A.D.N.J."/>
            <person name="Drysdale R.A."/>
            <person name="Harris N.L."/>
            <person name="Richter J."/>
            <person name="Russo S."/>
            <person name="Schroeder A.J."/>
            <person name="Shu S.Q."/>
            <person name="Stapleton M."/>
            <person name="Yamada C."/>
            <person name="Ashburner M."/>
            <person name="Gelbart W.M."/>
            <person name="Rubin G.M."/>
            <person name="Lewis S.E."/>
        </authorList>
    </citation>
    <scope>GENOME REANNOTATION</scope>
    <scope>ALTERNATIVE SPLICING</scope>
    <source>
        <strain>Berkeley</strain>
    </source>
</reference>
<reference key="4">
    <citation type="submission" date="2003-08" db="EMBL/GenBank/DDBJ databases">
        <authorList>
            <person name="Stapleton M."/>
            <person name="Brokstein P."/>
            <person name="Hong L."/>
            <person name="Agbayani A."/>
            <person name="Carlson J.W."/>
            <person name="Champe M."/>
            <person name="Chavez C."/>
            <person name="Dorsett V."/>
            <person name="Dresnek D."/>
            <person name="Farfan D."/>
            <person name="Frise E."/>
            <person name="George R.A."/>
            <person name="Gonzalez M."/>
            <person name="Guarin H."/>
            <person name="Kronmiller B."/>
            <person name="Li P.W."/>
            <person name="Liao G."/>
            <person name="Miranda A."/>
            <person name="Mungall C.J."/>
            <person name="Nunoo J."/>
            <person name="Pacleb J.M."/>
            <person name="Paragas V."/>
            <person name="Park S."/>
            <person name="Patel S."/>
            <person name="Phouanenavong S."/>
            <person name="Wan K.H."/>
            <person name="Yu C."/>
            <person name="Lewis S.E."/>
            <person name="Rubin G.M."/>
            <person name="Celniker S.E."/>
        </authorList>
    </citation>
    <scope>NUCLEOTIDE SEQUENCE [LARGE SCALE MRNA] (ISOFORM B)</scope>
    <source>
        <strain>Berkeley</strain>
        <tissue>Testis</tissue>
    </source>
</reference>
<reference key="5">
    <citation type="journal article" date="2003" name="Genes Dev.">
        <title>Drosophila FACT contributes to Hox gene expression through physical and functional interactions with GAGA factor.</title>
        <authorList>
            <person name="Shimojima T."/>
            <person name="Okada M."/>
            <person name="Nakayama T."/>
            <person name="Ueda H."/>
            <person name="Okawa K."/>
            <person name="Iwamatsu A."/>
            <person name="Handa H."/>
            <person name="Hirose S."/>
        </authorList>
    </citation>
    <scope>NUCLEOTIDE SEQUENCE [MRNA] OF 40-1083 (ISOFORM B)</scope>
    <scope>PROTEIN SEQUENCE OF 134-410; 613-627; 670-678; 703-710 AND 760-771</scope>
    <scope>FUNCTION</scope>
    <scope>INTERACTION WITH SSRP AND TRL</scope>
</reference>
<reference key="6">
    <citation type="journal article" date="1992" name="Genetics">
        <title>Developmental arrest and ecdysteroid deficiency resulting from mutations at the dre4 locus of Drosophila.</title>
        <authorList>
            <person name="Sliter T.J."/>
            <person name="Gilbert L.I."/>
        </authorList>
    </citation>
    <scope>PRELIMINARY FUNCTION</scope>
</reference>
<reference key="7">
    <citation type="journal article" date="2003" name="Science">
        <title>Tracking FACT and the RNA polymerase II elongation complex through chromatin in vivo.</title>
        <authorList>
            <person name="Saunders A."/>
            <person name="Werner J."/>
            <person name="Andrulis E.D."/>
            <person name="Nakayama T."/>
            <person name="Hirose S."/>
            <person name="Reinberg D."/>
            <person name="Lis J.T."/>
        </authorList>
    </citation>
    <scope>SUBCELLULAR LOCATION</scope>
</reference>
<reference key="8">
    <citation type="journal article" date="2008" name="J. Proteome Res.">
        <title>Phosphoproteome analysis of Drosophila melanogaster embryos.</title>
        <authorList>
            <person name="Zhai B."/>
            <person name="Villen J."/>
            <person name="Beausoleil S.A."/>
            <person name="Mintseris J."/>
            <person name="Gygi S.P."/>
        </authorList>
    </citation>
    <scope>PHOSPHORYLATION [LARGE SCALE ANALYSIS] AT SER-437</scope>
    <scope>IDENTIFICATION BY MASS SPECTROMETRY</scope>
    <source>
        <tissue>Embryo</tissue>
    </source>
</reference>
<keyword id="KW-0025">Alternative splicing</keyword>
<keyword id="KW-0158">Chromosome</keyword>
<keyword id="KW-0175">Coiled coil</keyword>
<keyword id="KW-0903">Direct protein sequencing</keyword>
<keyword id="KW-0227">DNA damage</keyword>
<keyword id="KW-0234">DNA repair</keyword>
<keyword id="KW-0235">DNA replication</keyword>
<keyword id="KW-0539">Nucleus</keyword>
<keyword id="KW-0597">Phosphoprotein</keyword>
<keyword id="KW-1185">Reference proteome</keyword>
<keyword id="KW-0804">Transcription</keyword>
<keyword id="KW-0805">Transcription regulation</keyword>
<evidence type="ECO:0000255" key="1"/>
<evidence type="ECO:0000256" key="2">
    <source>
        <dbReference type="SAM" id="MobiDB-lite"/>
    </source>
</evidence>
<evidence type="ECO:0000269" key="3">
    <source>
    </source>
</evidence>
<evidence type="ECO:0000269" key="4">
    <source>
    </source>
</evidence>
<evidence type="ECO:0000269" key="5">
    <source>
    </source>
</evidence>
<evidence type="ECO:0000303" key="6">
    <source ref="1"/>
</evidence>
<evidence type="ECO:0000305" key="7"/>
<protein>
    <recommendedName>
        <fullName>FACT complex subunit spt16</fullName>
    </recommendedName>
    <alternativeName>
        <fullName>Facilitates chromatin transcription complex subunit SPT16</fullName>
    </alternativeName>
    <alternativeName>
        <fullName>dSPT16</fullName>
    </alternativeName>
</protein>
<sequence length="1083" mass="123583">MSSFVLDKEAFVRRVKRLYTEWRAPSIGHDDALRNLDCIMSIVGVEEDVMYSKSMALQLWLLGYELTDTISVFCSDAVYFLTSKKKIEFLKQTQNITEEGFPEINLLVRDRTDKDQGNFEKLIKALQNSKKGKRLGVFAKDAYPGEFSEAWKKSLTASKFEHVDISTIIAYLMCPKDESEINNIRKASLVSMDIFNKYLKDEIMDIIDSDRKVKHNKLSDGCEAAIGEKKYTSGLDPRLLDMAYPPIIQSGGAYSLKFSAVADKNPLHFGVIVCSLGARYKSYCSNISRTFLVNPTEAMQENYTFLVSVQEEILKLLVPGTKLCDVYEKTLDFVKKEKPSMVDNLPKSFGFAMGLEFRENSIVIGPKCQALLKKNMVFNLHVGISNLTNPEATDKEGKNYALFIGDTVLVGEQSPASVMTPSKKKIKNVGIFIKDDSDEEDVDDKKTAKEDQGTEILGRSKRNAVLESKLRNEINTEEKRKEHQRELAQQLNERAKDRLARQGNSKEVEKVRKNTVSYKSISQMPREPEVKELKLYVDKKYETVIMPVFGIQVPFHISTIKNISQSVEGEYTYLRINFFHPGATMGRNEGGLYPQPEATFVKEVTYRSSNVKEHGEVGAPSANLNNAFRLIKEVQKRFKTREAEEREKEDLVKQDTLILSQNKGNPKLKDLYIRPNIVTKRMTGSLEAHSNGFRYISVRGDKVDILYNNIKSAFFQPCDGEMIILLHFHLKYAIMFGKKKHVDVQFYTEVGEITTDLGKHQHMHDRDDLAAEQAERELRHKLKTAFKSFCEKVETMTKSVVEFDTPFRELGFPGAPFRSTVTLQPTSGSLVNLTEWPPFVITLDDVELVHFERVQFHLRNFDMIFVFKEYNKKVAMVNAIPMNMLDHVKEWLNSCDIRYSEGVQSLNWQKIMKTITDDPEGFFEQGGWTFLDPESGSEGENETAESEEDEAYNPTDAESDEESDEDSEYSEASEDSEESDEDLGSDEESGKDWSDLEREAAEEDRNHDYAADDKPRNGKFDSKKHGKSSKHSPSKSSKDKYNSRDKHHSSSSSGNKSSSKDKDRKRSRDDSRDNGHKSKKSRH</sequence>
<gene>
    <name type="primary">dre4</name>
    <name type="synonym">spt16</name>
    <name type="ORF">CG1828</name>
</gene>
<dbReference type="EMBL" id="AF023269">
    <property type="protein sequence ID" value="AAB80935.1"/>
    <property type="status" value="ALT_FRAME"/>
    <property type="molecule type" value="mRNA"/>
</dbReference>
<dbReference type="EMBL" id="AF023270">
    <property type="protein sequence ID" value="AAB80936.1"/>
    <property type="status" value="ALT_FRAME"/>
    <property type="molecule type" value="mRNA"/>
</dbReference>
<dbReference type="EMBL" id="AE014296">
    <property type="protein sequence ID" value="AAF47587.2"/>
    <property type="molecule type" value="Genomic_DNA"/>
</dbReference>
<dbReference type="EMBL" id="AE014296">
    <property type="protein sequence ID" value="AAN11502.2"/>
    <property type="molecule type" value="Genomic_DNA"/>
</dbReference>
<dbReference type="EMBL" id="BT010116">
    <property type="protein sequence ID" value="AAQ22585.1"/>
    <property type="molecule type" value="mRNA"/>
</dbReference>
<dbReference type="EMBL" id="AB083008">
    <property type="protein sequence ID" value="BAC54898.1"/>
    <property type="molecule type" value="mRNA"/>
</dbReference>
<dbReference type="PIR" id="T13928">
    <property type="entry name" value="T13928"/>
</dbReference>
<dbReference type="PIR" id="T13929">
    <property type="entry name" value="T13929"/>
</dbReference>
<dbReference type="RefSeq" id="NP_476610.2">
    <molecule id="Q8IRG6-2"/>
    <property type="nucleotide sequence ID" value="NM_057262.4"/>
</dbReference>
<dbReference type="RefSeq" id="NP_728686.2">
    <molecule id="Q8IRG6-1"/>
    <property type="nucleotide sequence ID" value="NM_167922.3"/>
</dbReference>
<dbReference type="SMR" id="Q8IRG6"/>
<dbReference type="BioGRID" id="63776">
    <property type="interactions" value="9"/>
</dbReference>
<dbReference type="ComplexPortal" id="CPX-2466">
    <property type="entry name" value="FACT complex"/>
</dbReference>
<dbReference type="FunCoup" id="Q8IRG6">
    <property type="interactions" value="2703"/>
</dbReference>
<dbReference type="IntAct" id="Q8IRG6">
    <property type="interactions" value="97"/>
</dbReference>
<dbReference type="STRING" id="7227.FBpp0072743"/>
<dbReference type="MEROPS" id="M24.974"/>
<dbReference type="iPTMnet" id="Q8IRG6"/>
<dbReference type="PaxDb" id="7227-FBpp0072743"/>
<dbReference type="DNASU" id="38248"/>
<dbReference type="EnsemblMetazoa" id="FBtr0072864">
    <molecule id="Q8IRG6-2"/>
    <property type="protein sequence ID" value="FBpp0072743"/>
    <property type="gene ID" value="FBgn0002183"/>
</dbReference>
<dbReference type="EnsemblMetazoa" id="FBtr0072865">
    <molecule id="Q8IRG6-1"/>
    <property type="protein sequence ID" value="FBpp0072744"/>
    <property type="gene ID" value="FBgn0002183"/>
</dbReference>
<dbReference type="GeneID" id="38248"/>
<dbReference type="KEGG" id="dme:Dmel_CG1828"/>
<dbReference type="AGR" id="FB:FBgn0002183"/>
<dbReference type="CTD" id="38248"/>
<dbReference type="FlyBase" id="FBgn0002183">
    <property type="gene designation" value="dre4"/>
</dbReference>
<dbReference type="VEuPathDB" id="VectorBase:FBgn0002183"/>
<dbReference type="eggNOG" id="KOG1189">
    <property type="taxonomic scope" value="Eukaryota"/>
</dbReference>
<dbReference type="GeneTree" id="ENSGT00390000014495"/>
<dbReference type="HOGENOM" id="CLU_004627_0_0_1"/>
<dbReference type="InParanoid" id="Q8IRG6"/>
<dbReference type="OMA" id="YHINTIP"/>
<dbReference type="OrthoDB" id="10251642at2759"/>
<dbReference type="PhylomeDB" id="Q8IRG6"/>
<dbReference type="Reactome" id="R-DME-112382">
    <property type="pathway name" value="Formation of RNA Pol II elongation complex"/>
</dbReference>
<dbReference type="Reactome" id="R-DME-674695">
    <property type="pathway name" value="RNA Polymerase II Pre-transcription Events"/>
</dbReference>
<dbReference type="Reactome" id="R-DME-6796648">
    <property type="pathway name" value="TP53 Regulates Transcription of DNA Repair Genes"/>
</dbReference>
<dbReference type="Reactome" id="R-DME-6804756">
    <property type="pathway name" value="Regulation of TP53 Activity through Phosphorylation"/>
</dbReference>
<dbReference type="Reactome" id="R-DME-75955">
    <property type="pathway name" value="RNA Polymerase II Transcription Elongation"/>
</dbReference>
<dbReference type="SignaLink" id="Q8IRG6"/>
<dbReference type="BioGRID-ORCS" id="38248">
    <property type="hits" value="0 hits in 1 CRISPR screen"/>
</dbReference>
<dbReference type="GenomeRNAi" id="38248"/>
<dbReference type="PRO" id="PR:Q8IRG6"/>
<dbReference type="Proteomes" id="UP000000803">
    <property type="component" value="Chromosome 3L"/>
</dbReference>
<dbReference type="Bgee" id="FBgn0002183">
    <property type="expression patterns" value="Expressed in oocyte and 116 other cell types or tissues"/>
</dbReference>
<dbReference type="ExpressionAtlas" id="Q8IRG6">
    <property type="expression patterns" value="baseline and differential"/>
</dbReference>
<dbReference type="GO" id="GO:0005829">
    <property type="term" value="C:cytosol"/>
    <property type="evidence" value="ECO:0000314"/>
    <property type="project" value="CAFA"/>
</dbReference>
<dbReference type="GO" id="GO:0035101">
    <property type="term" value="C:FACT complex"/>
    <property type="evidence" value="ECO:0000314"/>
    <property type="project" value="FlyBase"/>
</dbReference>
<dbReference type="GO" id="GO:0005730">
    <property type="term" value="C:nucleolus"/>
    <property type="evidence" value="ECO:0000314"/>
    <property type="project" value="UniProtKB"/>
</dbReference>
<dbReference type="GO" id="GO:0005634">
    <property type="term" value="C:nucleus"/>
    <property type="evidence" value="ECO:0000314"/>
    <property type="project" value="FlyBase"/>
</dbReference>
<dbReference type="GO" id="GO:0005703">
    <property type="term" value="C:polytene chromosome puff"/>
    <property type="evidence" value="ECO:0000314"/>
    <property type="project" value="UniProtKB"/>
</dbReference>
<dbReference type="GO" id="GO:0003682">
    <property type="term" value="F:chromatin binding"/>
    <property type="evidence" value="ECO:0000314"/>
    <property type="project" value="FlyBase"/>
</dbReference>
<dbReference type="GO" id="GO:0031491">
    <property type="term" value="F:nucleosome binding"/>
    <property type="evidence" value="ECO:0000314"/>
    <property type="project" value="FlyBase"/>
</dbReference>
<dbReference type="GO" id="GO:0046982">
    <property type="term" value="F:protein heterodimerization activity"/>
    <property type="evidence" value="ECO:0000353"/>
    <property type="project" value="CAFA"/>
</dbReference>
<dbReference type="GO" id="GO:0006281">
    <property type="term" value="P:DNA repair"/>
    <property type="evidence" value="ECO:0007669"/>
    <property type="project" value="UniProtKB-KW"/>
</dbReference>
<dbReference type="GO" id="GO:0006260">
    <property type="term" value="P:DNA replication"/>
    <property type="evidence" value="ECO:0007669"/>
    <property type="project" value="UniProtKB-KW"/>
</dbReference>
<dbReference type="GO" id="GO:0032968">
    <property type="term" value="P:positive regulation of transcription elongation by RNA polymerase II"/>
    <property type="evidence" value="ECO:0000315"/>
    <property type="project" value="FlyBase"/>
</dbReference>
<dbReference type="GO" id="GO:1902275">
    <property type="term" value="P:regulation of chromatin organization"/>
    <property type="evidence" value="ECO:0000315"/>
    <property type="project" value="FlyBase"/>
</dbReference>
<dbReference type="GO" id="GO:0006368">
    <property type="term" value="P:transcription elongation by RNA polymerase II"/>
    <property type="evidence" value="ECO:0000318"/>
    <property type="project" value="GO_Central"/>
</dbReference>
<dbReference type="CDD" id="cd01091">
    <property type="entry name" value="CDC68-like"/>
    <property type="match status" value="1"/>
</dbReference>
<dbReference type="DisProt" id="DP00721"/>
<dbReference type="FunFam" id="2.30.29.150:FF:000003">
    <property type="entry name" value="FACT complex subunit SPT16"/>
    <property type="match status" value="1"/>
</dbReference>
<dbReference type="FunFam" id="2.30.29.30:FF:000017">
    <property type="entry name" value="FACT complex subunit SPT16"/>
    <property type="match status" value="1"/>
</dbReference>
<dbReference type="FunFam" id="2.30.29.210:FF:000001">
    <property type="entry name" value="FACT complex subunit spt16"/>
    <property type="match status" value="1"/>
</dbReference>
<dbReference type="FunFam" id="3.40.350.10:FF:000022">
    <property type="entry name" value="FACT complex subunit spt16"/>
    <property type="match status" value="1"/>
</dbReference>
<dbReference type="FunFam" id="3.90.230.10:FF:000005">
    <property type="entry name" value="FACT complex subunit spt16"/>
    <property type="match status" value="1"/>
</dbReference>
<dbReference type="Gene3D" id="2.30.29.150">
    <property type="match status" value="1"/>
</dbReference>
<dbReference type="Gene3D" id="3.90.230.10">
    <property type="entry name" value="Creatinase/methionine aminopeptidase superfamily"/>
    <property type="match status" value="1"/>
</dbReference>
<dbReference type="Gene3D" id="3.40.350.10">
    <property type="entry name" value="Creatinase/prolidase N-terminal domain"/>
    <property type="match status" value="1"/>
</dbReference>
<dbReference type="Gene3D" id="2.30.29.210">
    <property type="entry name" value="FACT complex subunit Spt16p/Cdc68p"/>
    <property type="match status" value="1"/>
</dbReference>
<dbReference type="Gene3D" id="2.30.29.30">
    <property type="entry name" value="Pleckstrin-homology domain (PH domain)/Phosphotyrosine-binding domain (PTB)"/>
    <property type="match status" value="1"/>
</dbReference>
<dbReference type="IDEAL" id="IID50095"/>
<dbReference type="InterPro" id="IPR029149">
    <property type="entry name" value="Creatin/AminoP/Spt16_N"/>
</dbReference>
<dbReference type="InterPro" id="IPR036005">
    <property type="entry name" value="Creatinase/aminopeptidase-like"/>
</dbReference>
<dbReference type="InterPro" id="IPR029148">
    <property type="entry name" value="FACT-SPT16_Nlobe"/>
</dbReference>
<dbReference type="InterPro" id="IPR056595">
    <property type="entry name" value="Fact-SPT16_PH"/>
</dbReference>
<dbReference type="InterPro" id="IPR048969">
    <property type="entry name" value="FACT_SPT16_C"/>
</dbReference>
<dbReference type="InterPro" id="IPR013953">
    <property type="entry name" value="FACT_SPT16_M"/>
</dbReference>
<dbReference type="InterPro" id="IPR000994">
    <property type="entry name" value="Pept_M24"/>
</dbReference>
<dbReference type="InterPro" id="IPR011993">
    <property type="entry name" value="PH-like_dom_sf"/>
</dbReference>
<dbReference type="InterPro" id="IPR013719">
    <property type="entry name" value="RTT106/SPT16-like_middle_dom"/>
</dbReference>
<dbReference type="InterPro" id="IPR040258">
    <property type="entry name" value="Spt16"/>
</dbReference>
<dbReference type="InterPro" id="IPR033825">
    <property type="entry name" value="Spt16_M24"/>
</dbReference>
<dbReference type="PANTHER" id="PTHR13980">
    <property type="entry name" value="CDC68 RELATED"/>
    <property type="match status" value="1"/>
</dbReference>
<dbReference type="PANTHER" id="PTHR13980:SF15">
    <property type="entry name" value="FACT COMPLEX SUBUNIT SPT16"/>
    <property type="match status" value="1"/>
</dbReference>
<dbReference type="Pfam" id="PF14826">
    <property type="entry name" value="FACT-Spt16_Nlob"/>
    <property type="match status" value="1"/>
</dbReference>
<dbReference type="Pfam" id="PF00557">
    <property type="entry name" value="Peptidase_M24"/>
    <property type="match status" value="1"/>
</dbReference>
<dbReference type="Pfam" id="PF24824">
    <property type="entry name" value="PH_SPT16"/>
    <property type="match status" value="1"/>
</dbReference>
<dbReference type="Pfam" id="PF08512">
    <property type="entry name" value="Rttp106-like_middle"/>
    <property type="match status" value="1"/>
</dbReference>
<dbReference type="Pfam" id="PF08644">
    <property type="entry name" value="SPT16"/>
    <property type="match status" value="1"/>
</dbReference>
<dbReference type="Pfam" id="PF21091">
    <property type="entry name" value="SPT16_C"/>
    <property type="match status" value="1"/>
</dbReference>
<dbReference type="SMART" id="SM01285">
    <property type="entry name" value="FACT-Spt16_Nlob"/>
    <property type="match status" value="1"/>
</dbReference>
<dbReference type="SMART" id="SM01287">
    <property type="entry name" value="Rtt106"/>
    <property type="match status" value="1"/>
</dbReference>
<dbReference type="SMART" id="SM01286">
    <property type="entry name" value="SPT16"/>
    <property type="match status" value="1"/>
</dbReference>
<dbReference type="SUPFAM" id="SSF55920">
    <property type="entry name" value="Creatinase/aminopeptidase"/>
    <property type="match status" value="1"/>
</dbReference>
<organism>
    <name type="scientific">Drosophila melanogaster</name>
    <name type="common">Fruit fly</name>
    <dbReference type="NCBI Taxonomy" id="7227"/>
    <lineage>
        <taxon>Eukaryota</taxon>
        <taxon>Metazoa</taxon>
        <taxon>Ecdysozoa</taxon>
        <taxon>Arthropoda</taxon>
        <taxon>Hexapoda</taxon>
        <taxon>Insecta</taxon>
        <taxon>Pterygota</taxon>
        <taxon>Neoptera</taxon>
        <taxon>Endopterygota</taxon>
        <taxon>Diptera</taxon>
        <taxon>Brachycera</taxon>
        <taxon>Muscomorpha</taxon>
        <taxon>Ephydroidea</taxon>
        <taxon>Drosophilidae</taxon>
        <taxon>Drosophila</taxon>
        <taxon>Sophophora</taxon>
    </lineage>
</organism>